<feature type="chain" id="PRO_0000378138" description="UPF0179 protein TON_1048">
    <location>
        <begin position="1"/>
        <end position="149"/>
    </location>
</feature>
<comment type="similarity">
    <text evidence="1">Belongs to the UPF0179 family.</text>
</comment>
<sequence length="149" mass="16576">MEVFGMAIITLVGEKLARPGVEFIYYGPAEPCRTCKLAGVCVGNLEPGRRYKILRVRSMPSHSCPLHEGKVRVVEVVEPSIEVAIEPRLAIAGSVIKLSFVDCSDPEKRDLFRPEGLFEGDSVKIIEILGDVECNGRTYKLVKVMRKKE</sequence>
<dbReference type="EMBL" id="CP000855">
    <property type="protein sequence ID" value="ACJ16536.1"/>
    <property type="molecule type" value="Genomic_DNA"/>
</dbReference>
<dbReference type="STRING" id="523850.TON_1048"/>
<dbReference type="KEGG" id="ton:TON_1048"/>
<dbReference type="PATRIC" id="fig|523850.10.peg.1056"/>
<dbReference type="eggNOG" id="arCOG04477">
    <property type="taxonomic scope" value="Archaea"/>
</dbReference>
<dbReference type="HOGENOM" id="CLU_121764_0_0_2"/>
<dbReference type="Proteomes" id="UP000002727">
    <property type="component" value="Chromosome"/>
</dbReference>
<dbReference type="HAMAP" id="MF_00498">
    <property type="entry name" value="UPF0179"/>
    <property type="match status" value="1"/>
</dbReference>
<dbReference type="InterPro" id="IPR005369">
    <property type="entry name" value="UPF0179"/>
</dbReference>
<dbReference type="NCBIfam" id="NF002253">
    <property type="entry name" value="PRK01177.1"/>
    <property type="match status" value="1"/>
</dbReference>
<dbReference type="PANTHER" id="PTHR40699">
    <property type="entry name" value="UPF0179 PROTEIN MJ1627"/>
    <property type="match status" value="1"/>
</dbReference>
<dbReference type="PANTHER" id="PTHR40699:SF1">
    <property type="entry name" value="UPF0179 PROTEIN MJ1627"/>
    <property type="match status" value="1"/>
</dbReference>
<dbReference type="Pfam" id="PF03684">
    <property type="entry name" value="UPF0179"/>
    <property type="match status" value="1"/>
</dbReference>
<dbReference type="PIRSF" id="PIRSF006595">
    <property type="entry name" value="UCP006595"/>
    <property type="match status" value="1"/>
</dbReference>
<gene>
    <name type="ordered locus">TON_1048</name>
</gene>
<name>Y1048_THEON</name>
<accession>B6YWS3</accession>
<proteinExistence type="inferred from homology"/>
<organism>
    <name type="scientific">Thermococcus onnurineus (strain NA1)</name>
    <dbReference type="NCBI Taxonomy" id="523850"/>
    <lineage>
        <taxon>Archaea</taxon>
        <taxon>Methanobacteriati</taxon>
        <taxon>Methanobacteriota</taxon>
        <taxon>Thermococci</taxon>
        <taxon>Thermococcales</taxon>
        <taxon>Thermococcaceae</taxon>
        <taxon>Thermococcus</taxon>
    </lineage>
</organism>
<evidence type="ECO:0000255" key="1">
    <source>
        <dbReference type="HAMAP-Rule" id="MF_00498"/>
    </source>
</evidence>
<protein>
    <recommendedName>
        <fullName evidence="1">UPF0179 protein TON_1048</fullName>
    </recommendedName>
</protein>
<reference key="1">
    <citation type="journal article" date="2008" name="J. Bacteriol.">
        <title>The complete genome sequence of Thermococcus onnurineus NA1 reveals a mixed heterotrophic and carboxydotrophic metabolism.</title>
        <authorList>
            <person name="Lee H.S."/>
            <person name="Kang S.G."/>
            <person name="Bae S.S."/>
            <person name="Lim J.K."/>
            <person name="Cho Y."/>
            <person name="Kim Y.J."/>
            <person name="Jeon J.H."/>
            <person name="Cha S.-S."/>
            <person name="Kwon K.K."/>
            <person name="Kim H.-T."/>
            <person name="Park C.-J."/>
            <person name="Lee H.-W."/>
            <person name="Kim S.I."/>
            <person name="Chun J."/>
            <person name="Colwell R.R."/>
            <person name="Kim S.-J."/>
            <person name="Lee J.-H."/>
        </authorList>
    </citation>
    <scope>NUCLEOTIDE SEQUENCE [LARGE SCALE GENOMIC DNA]</scope>
    <source>
        <strain>NA1</strain>
    </source>
</reference>